<accession>P07486</accession>
<accession>A4UZ75</accession>
<accession>A5XCT3</accession>
<accession>A5XCT7</accession>
<accession>Q8SXG8</accession>
<accession>Q9V318</accession>
<comment type="catalytic activity">
    <reaction evidence="2">
        <text>D-glyceraldehyde 3-phosphate + phosphate + NAD(+) = (2R)-3-phospho-glyceroyl phosphate + NADH + H(+)</text>
        <dbReference type="Rhea" id="RHEA:10300"/>
        <dbReference type="ChEBI" id="CHEBI:15378"/>
        <dbReference type="ChEBI" id="CHEBI:43474"/>
        <dbReference type="ChEBI" id="CHEBI:57540"/>
        <dbReference type="ChEBI" id="CHEBI:57604"/>
        <dbReference type="ChEBI" id="CHEBI:57945"/>
        <dbReference type="ChEBI" id="CHEBI:59776"/>
        <dbReference type="EC" id="1.2.1.12"/>
    </reaction>
</comment>
<comment type="pathway">
    <text>Carbohydrate degradation; glycolysis; pyruvate from D-glyceraldehyde 3-phosphate: step 1/5.</text>
</comment>
<comment type="subunit">
    <text>Homotetramer.</text>
</comment>
<comment type="subcellular location">
    <subcellularLocation>
        <location>Cytoplasm</location>
    </subcellularLocation>
</comment>
<comment type="developmental stage">
    <text evidence="4">Expressed during adult stages.</text>
</comment>
<comment type="similarity">
    <text evidence="5">Belongs to the glyceraldehyde-3-phosphate dehydrogenase family.</text>
</comment>
<feature type="chain" id="PRO_0000145521" description="Glyceraldehyde-3-phosphate dehydrogenase 1">
    <location>
        <begin position="1"/>
        <end position="332"/>
    </location>
</feature>
<feature type="active site" description="Nucleophile" evidence="2">
    <location>
        <position position="149"/>
    </location>
</feature>
<feature type="binding site" evidence="1">
    <location>
        <begin position="11"/>
        <end position="12"/>
    </location>
    <ligand>
        <name>NAD(+)</name>
        <dbReference type="ChEBI" id="CHEBI:57540"/>
    </ligand>
</feature>
<feature type="binding site" evidence="1">
    <location>
        <position position="32"/>
    </location>
    <ligand>
        <name>NAD(+)</name>
        <dbReference type="ChEBI" id="CHEBI:57540"/>
    </ligand>
</feature>
<feature type="binding site" evidence="1">
    <location>
        <position position="77"/>
    </location>
    <ligand>
        <name>NAD(+)</name>
        <dbReference type="ChEBI" id="CHEBI:57540"/>
    </ligand>
</feature>
<feature type="binding site" evidence="1">
    <location>
        <begin position="148"/>
        <end position="150"/>
    </location>
    <ligand>
        <name>D-glyceraldehyde 3-phosphate</name>
        <dbReference type="ChEBI" id="CHEBI:59776"/>
    </ligand>
</feature>
<feature type="binding site" evidence="1">
    <location>
        <position position="179"/>
    </location>
    <ligand>
        <name>D-glyceraldehyde 3-phosphate</name>
        <dbReference type="ChEBI" id="CHEBI:59776"/>
    </ligand>
</feature>
<feature type="binding site" evidence="1">
    <location>
        <begin position="208"/>
        <end position="209"/>
    </location>
    <ligand>
        <name>D-glyceraldehyde 3-phosphate</name>
        <dbReference type="ChEBI" id="CHEBI:59776"/>
    </ligand>
</feature>
<feature type="binding site" evidence="1">
    <location>
        <position position="231"/>
    </location>
    <ligand>
        <name>D-glyceraldehyde 3-phosphate</name>
        <dbReference type="ChEBI" id="CHEBI:59776"/>
    </ligand>
</feature>
<feature type="binding site" evidence="1">
    <location>
        <position position="313"/>
    </location>
    <ligand>
        <name>NAD(+)</name>
        <dbReference type="ChEBI" id="CHEBI:57540"/>
    </ligand>
</feature>
<feature type="site" description="Activates thiol group during catalysis" evidence="1">
    <location>
        <position position="176"/>
    </location>
</feature>
<feature type="sequence variant" description="In strain: HFL23, HFL5, VT10, VT6 and HFL2." evidence="3 4">
    <original>F</original>
    <variation>L</variation>
    <location>
        <position position="284"/>
    </location>
</feature>
<feature type="sequence variant" description="In strain: VT37, HFL15 and HFL3." evidence="3">
    <original>F</original>
    <variation>V</variation>
    <location>
        <position position="284"/>
    </location>
</feature>
<keyword id="KW-0963">Cytoplasm</keyword>
<keyword id="KW-0324">Glycolysis</keyword>
<keyword id="KW-0520">NAD</keyword>
<keyword id="KW-0560">Oxidoreductase</keyword>
<keyword id="KW-1185">Reference proteome</keyword>
<evidence type="ECO:0000250" key="1"/>
<evidence type="ECO:0000255" key="2">
    <source>
        <dbReference type="PROSITE-ProRule" id="PRU10009"/>
    </source>
</evidence>
<evidence type="ECO:0000269" key="3">
    <source>
    </source>
</evidence>
<evidence type="ECO:0000269" key="4">
    <source>
    </source>
</evidence>
<evidence type="ECO:0000305" key="5"/>
<dbReference type="EC" id="1.2.1.12"/>
<dbReference type="EMBL" id="M11254">
    <property type="protein sequence ID" value="AAA28560.1"/>
    <property type="molecule type" value="Genomic_DNA"/>
</dbReference>
<dbReference type="EMBL" id="DQ864083">
    <property type="protein sequence ID" value="ABH06718.1"/>
    <property type="molecule type" value="Genomic_DNA"/>
</dbReference>
<dbReference type="EMBL" id="DQ864084">
    <property type="protein sequence ID" value="ABH06719.1"/>
    <property type="molecule type" value="Genomic_DNA"/>
</dbReference>
<dbReference type="EMBL" id="DQ864085">
    <property type="protein sequence ID" value="ABH06720.1"/>
    <property type="molecule type" value="Genomic_DNA"/>
</dbReference>
<dbReference type="EMBL" id="DQ864086">
    <property type="protein sequence ID" value="ABH06721.1"/>
    <property type="molecule type" value="Genomic_DNA"/>
</dbReference>
<dbReference type="EMBL" id="DQ864087">
    <property type="protein sequence ID" value="ABH06722.1"/>
    <property type="molecule type" value="Genomic_DNA"/>
</dbReference>
<dbReference type="EMBL" id="DQ864088">
    <property type="protein sequence ID" value="ABH06723.1"/>
    <property type="molecule type" value="Genomic_DNA"/>
</dbReference>
<dbReference type="EMBL" id="DQ864089">
    <property type="protein sequence ID" value="ABH06724.1"/>
    <property type="molecule type" value="Genomic_DNA"/>
</dbReference>
<dbReference type="EMBL" id="DQ864090">
    <property type="protein sequence ID" value="ABH06725.1"/>
    <property type="molecule type" value="Genomic_DNA"/>
</dbReference>
<dbReference type="EMBL" id="DQ864091">
    <property type="protein sequence ID" value="ABH06726.1"/>
    <property type="molecule type" value="Genomic_DNA"/>
</dbReference>
<dbReference type="EMBL" id="DQ864092">
    <property type="protein sequence ID" value="ABH06727.1"/>
    <property type="molecule type" value="Genomic_DNA"/>
</dbReference>
<dbReference type="EMBL" id="DQ864093">
    <property type="protein sequence ID" value="ABH06728.1"/>
    <property type="molecule type" value="Genomic_DNA"/>
</dbReference>
<dbReference type="EMBL" id="DQ864094">
    <property type="protein sequence ID" value="ABH06729.1"/>
    <property type="molecule type" value="Genomic_DNA"/>
</dbReference>
<dbReference type="EMBL" id="AE013599">
    <property type="protein sequence ID" value="AAF59192.2"/>
    <property type="molecule type" value="Genomic_DNA"/>
</dbReference>
<dbReference type="EMBL" id="AE013599">
    <property type="protein sequence ID" value="ABC66066.1"/>
    <property type="molecule type" value="Genomic_DNA"/>
</dbReference>
<dbReference type="EMBL" id="AY089643">
    <property type="protein sequence ID" value="AAL90381.1"/>
    <property type="molecule type" value="mRNA"/>
</dbReference>
<dbReference type="EMBL" id="BT004485">
    <property type="protein sequence ID" value="AAO42649.1"/>
    <property type="molecule type" value="mRNA"/>
</dbReference>
<dbReference type="PIR" id="A22366">
    <property type="entry name" value="A22366"/>
</dbReference>
<dbReference type="RefSeq" id="NP_001033936.1">
    <property type="nucleotide sequence ID" value="NM_001038847.2"/>
</dbReference>
<dbReference type="RefSeq" id="NP_525108.2">
    <property type="nucleotide sequence ID" value="NM_080369.3"/>
</dbReference>
<dbReference type="SMR" id="P07486"/>
<dbReference type="BioGRID" id="61596">
    <property type="interactions" value="25"/>
</dbReference>
<dbReference type="FunCoup" id="P07486">
    <property type="interactions" value="537"/>
</dbReference>
<dbReference type="IntAct" id="P07486">
    <property type="interactions" value="24"/>
</dbReference>
<dbReference type="STRING" id="7227.FBpp0087977"/>
<dbReference type="GlyGen" id="P07486">
    <property type="glycosylation" value="1 site, 1 O-linked glycan (1 site)"/>
</dbReference>
<dbReference type="PaxDb" id="7227-FBpp0087977"/>
<dbReference type="DNASU" id="35728"/>
<dbReference type="EnsemblMetazoa" id="FBtr0088903">
    <property type="protein sequence ID" value="FBpp0087977"/>
    <property type="gene ID" value="FBgn0001091"/>
</dbReference>
<dbReference type="EnsemblMetazoa" id="FBtr0100479">
    <property type="protein sequence ID" value="FBpp0099914"/>
    <property type="gene ID" value="FBgn0001091"/>
</dbReference>
<dbReference type="GeneID" id="35728"/>
<dbReference type="KEGG" id="dme:Dmel_CG12055"/>
<dbReference type="AGR" id="FB:FBgn0001091"/>
<dbReference type="CTD" id="35728"/>
<dbReference type="FlyBase" id="FBgn0001091">
    <property type="gene designation" value="Gapdh1"/>
</dbReference>
<dbReference type="VEuPathDB" id="VectorBase:FBgn0001091"/>
<dbReference type="eggNOG" id="KOG0657">
    <property type="taxonomic scope" value="Eukaryota"/>
</dbReference>
<dbReference type="GeneTree" id="ENSGT00940000153298"/>
<dbReference type="HOGENOM" id="CLU_030140_0_3_1"/>
<dbReference type="InParanoid" id="P07486"/>
<dbReference type="OMA" id="TCQMIRL"/>
<dbReference type="OrthoDB" id="1152826at2759"/>
<dbReference type="PhylomeDB" id="P07486"/>
<dbReference type="Reactome" id="R-DME-70171">
    <property type="pathway name" value="Glycolysis"/>
</dbReference>
<dbReference type="Reactome" id="R-DME-70263">
    <property type="pathway name" value="Gluconeogenesis"/>
</dbReference>
<dbReference type="UniPathway" id="UPA00109">
    <property type="reaction ID" value="UER00184"/>
</dbReference>
<dbReference type="BioGRID-ORCS" id="35728">
    <property type="hits" value="0 hits in 3 CRISPR screens"/>
</dbReference>
<dbReference type="GenomeRNAi" id="35728"/>
<dbReference type="PRO" id="PR:P07486"/>
<dbReference type="Proteomes" id="UP000000803">
    <property type="component" value="Chromosome 2R"/>
</dbReference>
<dbReference type="Bgee" id="FBgn0001091">
    <property type="expression patterns" value="Expressed in reticular neuropil associated glial cell (Drosophila) in brain and 290 other cell types or tissues"/>
</dbReference>
<dbReference type="GO" id="GO:0005829">
    <property type="term" value="C:cytosol"/>
    <property type="evidence" value="ECO:0000250"/>
    <property type="project" value="FlyBase"/>
</dbReference>
<dbReference type="GO" id="GO:0031430">
    <property type="term" value="C:M band"/>
    <property type="evidence" value="ECO:0000314"/>
    <property type="project" value="FlyBase"/>
</dbReference>
<dbReference type="GO" id="GO:0030018">
    <property type="term" value="C:Z disc"/>
    <property type="evidence" value="ECO:0000314"/>
    <property type="project" value="FlyBase"/>
</dbReference>
<dbReference type="GO" id="GO:0004365">
    <property type="term" value="F:glyceraldehyde-3-phosphate dehydrogenase (NAD+) (phosphorylating) activity"/>
    <property type="evidence" value="ECO:0000316"/>
    <property type="project" value="FlyBase"/>
</dbReference>
<dbReference type="GO" id="GO:0051287">
    <property type="term" value="F:NAD binding"/>
    <property type="evidence" value="ECO:0007669"/>
    <property type="project" value="InterPro"/>
</dbReference>
<dbReference type="GO" id="GO:0050661">
    <property type="term" value="F:NADP binding"/>
    <property type="evidence" value="ECO:0007669"/>
    <property type="project" value="InterPro"/>
</dbReference>
<dbReference type="GO" id="GO:0035605">
    <property type="term" value="F:peptidyl-cysteine S-nitrosylase activity"/>
    <property type="evidence" value="ECO:0000250"/>
    <property type="project" value="FlyBase"/>
</dbReference>
<dbReference type="GO" id="GO:0061621">
    <property type="term" value="P:canonical glycolysis"/>
    <property type="evidence" value="ECO:0000250"/>
    <property type="project" value="FlyBase"/>
</dbReference>
<dbReference type="GO" id="GO:0006094">
    <property type="term" value="P:gluconeogenesis"/>
    <property type="evidence" value="ECO:0000250"/>
    <property type="project" value="FlyBase"/>
</dbReference>
<dbReference type="GO" id="GO:0019682">
    <property type="term" value="P:glyceraldehyde-3-phosphate metabolic process"/>
    <property type="evidence" value="ECO:0000316"/>
    <property type="project" value="FlyBase"/>
</dbReference>
<dbReference type="GO" id="GO:0006096">
    <property type="term" value="P:glycolytic process"/>
    <property type="evidence" value="ECO:0000270"/>
    <property type="project" value="FlyBase"/>
</dbReference>
<dbReference type="CDD" id="cd18126">
    <property type="entry name" value="GAPDH_I_C"/>
    <property type="match status" value="1"/>
</dbReference>
<dbReference type="CDD" id="cd05214">
    <property type="entry name" value="GAPDH_I_N"/>
    <property type="match status" value="1"/>
</dbReference>
<dbReference type="FunFam" id="3.30.360.10:FF:000001">
    <property type="entry name" value="Glyceraldehyde-3-phosphate dehydrogenase"/>
    <property type="match status" value="1"/>
</dbReference>
<dbReference type="FunFam" id="3.40.50.720:FF:000266">
    <property type="entry name" value="Glyceraldehyde-3-phosphate dehydrogenase"/>
    <property type="match status" value="1"/>
</dbReference>
<dbReference type="Gene3D" id="3.30.360.10">
    <property type="entry name" value="Dihydrodipicolinate Reductase, domain 2"/>
    <property type="match status" value="1"/>
</dbReference>
<dbReference type="Gene3D" id="3.40.50.720">
    <property type="entry name" value="NAD(P)-binding Rossmann-like Domain"/>
    <property type="match status" value="1"/>
</dbReference>
<dbReference type="InterPro" id="IPR020831">
    <property type="entry name" value="GlycerAld/Erythrose_P_DH"/>
</dbReference>
<dbReference type="InterPro" id="IPR020830">
    <property type="entry name" value="GlycerAld_3-P_DH_AS"/>
</dbReference>
<dbReference type="InterPro" id="IPR020829">
    <property type="entry name" value="GlycerAld_3-P_DH_cat"/>
</dbReference>
<dbReference type="InterPro" id="IPR020828">
    <property type="entry name" value="GlycerAld_3-P_DH_NAD(P)-bd"/>
</dbReference>
<dbReference type="InterPro" id="IPR006424">
    <property type="entry name" value="Glyceraldehyde-3-P_DH_1"/>
</dbReference>
<dbReference type="InterPro" id="IPR036291">
    <property type="entry name" value="NAD(P)-bd_dom_sf"/>
</dbReference>
<dbReference type="NCBIfam" id="TIGR01534">
    <property type="entry name" value="GAPDH-I"/>
    <property type="match status" value="1"/>
</dbReference>
<dbReference type="PANTHER" id="PTHR10836">
    <property type="entry name" value="GLYCERALDEHYDE 3-PHOSPHATE DEHYDROGENASE"/>
    <property type="match status" value="1"/>
</dbReference>
<dbReference type="PANTHER" id="PTHR10836:SF76">
    <property type="entry name" value="GLYCERALDEHYDE-3-PHOSPHATE DEHYDROGENASE-RELATED"/>
    <property type="match status" value="1"/>
</dbReference>
<dbReference type="Pfam" id="PF02800">
    <property type="entry name" value="Gp_dh_C"/>
    <property type="match status" value="1"/>
</dbReference>
<dbReference type="Pfam" id="PF00044">
    <property type="entry name" value="Gp_dh_N"/>
    <property type="match status" value="1"/>
</dbReference>
<dbReference type="PIRSF" id="PIRSF000149">
    <property type="entry name" value="GAP_DH"/>
    <property type="match status" value="1"/>
</dbReference>
<dbReference type="PRINTS" id="PR00078">
    <property type="entry name" value="G3PDHDRGNASE"/>
</dbReference>
<dbReference type="SMART" id="SM00846">
    <property type="entry name" value="Gp_dh_N"/>
    <property type="match status" value="1"/>
</dbReference>
<dbReference type="SUPFAM" id="SSF55347">
    <property type="entry name" value="Glyceraldehyde-3-phosphate dehydrogenase-like, C-terminal domain"/>
    <property type="match status" value="1"/>
</dbReference>
<dbReference type="SUPFAM" id="SSF51735">
    <property type="entry name" value="NAD(P)-binding Rossmann-fold domains"/>
    <property type="match status" value="1"/>
</dbReference>
<dbReference type="PROSITE" id="PS00071">
    <property type="entry name" value="GAPDH"/>
    <property type="match status" value="1"/>
</dbReference>
<gene>
    <name type="primary">Gapdh1</name>
    <name type="synonym">Gadph-1</name>
    <name type="ORF">CG12055</name>
</gene>
<name>G3P1_DROME</name>
<organism>
    <name type="scientific">Drosophila melanogaster</name>
    <name type="common">Fruit fly</name>
    <dbReference type="NCBI Taxonomy" id="7227"/>
    <lineage>
        <taxon>Eukaryota</taxon>
        <taxon>Metazoa</taxon>
        <taxon>Ecdysozoa</taxon>
        <taxon>Arthropoda</taxon>
        <taxon>Hexapoda</taxon>
        <taxon>Insecta</taxon>
        <taxon>Pterygota</taxon>
        <taxon>Neoptera</taxon>
        <taxon>Endopterygota</taxon>
        <taxon>Diptera</taxon>
        <taxon>Brachycera</taxon>
        <taxon>Muscomorpha</taxon>
        <taxon>Ephydroidea</taxon>
        <taxon>Drosophilidae</taxon>
        <taxon>Drosophila</taxon>
        <taxon>Sophophora</taxon>
    </lineage>
</organism>
<reference key="1">
    <citation type="journal article" date="1985" name="J. Biol. Chem.">
        <title>Structure of two unlinked Drosophila melanogaster glyceraldehyde-3-phosphate dehydrogenase genes.</title>
        <authorList>
            <person name="Tso J.Y."/>
            <person name="Sun X.-H."/>
            <person name="Wu R."/>
        </authorList>
    </citation>
    <scope>NUCLEOTIDE SEQUENCE [GENOMIC DNA]</scope>
    <scope>DEVELOPMENTAL STAGE</scope>
    <scope>VARIANT LEU-284</scope>
</reference>
<reference key="2">
    <citation type="journal article" date="2007" name="Mol. Biol. Evol.">
        <title>Adaptive evolution of metabolic pathways in Drosophila.</title>
        <authorList>
            <person name="Flowers J."/>
            <person name="Sezgin E."/>
            <person name="Kumagai S."/>
            <person name="Duvernell D."/>
            <person name="Matzkin L."/>
            <person name="Schmidt P."/>
            <person name="Eanes W."/>
        </authorList>
    </citation>
    <scope>NUCLEOTIDE SEQUENCE [GENOMIC DNA]</scope>
    <scope>VARIANTS LEU-284 AND VAL-284</scope>
    <source>
        <strain>HFL15</strain>
        <strain>HFL2</strain>
        <strain>HFL23</strain>
        <strain>HFL3</strain>
        <strain>HFL5</strain>
        <strain>VT1</strain>
        <strain>VT10</strain>
        <strain>VT11</strain>
        <strain>VT37</strain>
        <strain>VT44</strain>
        <strain>VT6</strain>
        <strain>VT9</strain>
    </source>
</reference>
<reference key="3">
    <citation type="journal article" date="2000" name="Science">
        <title>The genome sequence of Drosophila melanogaster.</title>
        <authorList>
            <person name="Adams M.D."/>
            <person name="Celniker S.E."/>
            <person name="Holt R.A."/>
            <person name="Evans C.A."/>
            <person name="Gocayne J.D."/>
            <person name="Amanatides P.G."/>
            <person name="Scherer S.E."/>
            <person name="Li P.W."/>
            <person name="Hoskins R.A."/>
            <person name="Galle R.F."/>
            <person name="George R.A."/>
            <person name="Lewis S.E."/>
            <person name="Richards S."/>
            <person name="Ashburner M."/>
            <person name="Henderson S.N."/>
            <person name="Sutton G.G."/>
            <person name="Wortman J.R."/>
            <person name="Yandell M.D."/>
            <person name="Zhang Q."/>
            <person name="Chen L.X."/>
            <person name="Brandon R.C."/>
            <person name="Rogers Y.-H.C."/>
            <person name="Blazej R.G."/>
            <person name="Champe M."/>
            <person name="Pfeiffer B.D."/>
            <person name="Wan K.H."/>
            <person name="Doyle C."/>
            <person name="Baxter E.G."/>
            <person name="Helt G."/>
            <person name="Nelson C.R."/>
            <person name="Miklos G.L.G."/>
            <person name="Abril J.F."/>
            <person name="Agbayani A."/>
            <person name="An H.-J."/>
            <person name="Andrews-Pfannkoch C."/>
            <person name="Baldwin D."/>
            <person name="Ballew R.M."/>
            <person name="Basu A."/>
            <person name="Baxendale J."/>
            <person name="Bayraktaroglu L."/>
            <person name="Beasley E.M."/>
            <person name="Beeson K.Y."/>
            <person name="Benos P.V."/>
            <person name="Berman B.P."/>
            <person name="Bhandari D."/>
            <person name="Bolshakov S."/>
            <person name="Borkova D."/>
            <person name="Botchan M.R."/>
            <person name="Bouck J."/>
            <person name="Brokstein P."/>
            <person name="Brottier P."/>
            <person name="Burtis K.C."/>
            <person name="Busam D.A."/>
            <person name="Butler H."/>
            <person name="Cadieu E."/>
            <person name="Center A."/>
            <person name="Chandra I."/>
            <person name="Cherry J.M."/>
            <person name="Cawley S."/>
            <person name="Dahlke C."/>
            <person name="Davenport L.B."/>
            <person name="Davies P."/>
            <person name="de Pablos B."/>
            <person name="Delcher A."/>
            <person name="Deng Z."/>
            <person name="Mays A.D."/>
            <person name="Dew I."/>
            <person name="Dietz S.M."/>
            <person name="Dodson K."/>
            <person name="Doup L.E."/>
            <person name="Downes M."/>
            <person name="Dugan-Rocha S."/>
            <person name="Dunkov B.C."/>
            <person name="Dunn P."/>
            <person name="Durbin K.J."/>
            <person name="Evangelista C.C."/>
            <person name="Ferraz C."/>
            <person name="Ferriera S."/>
            <person name="Fleischmann W."/>
            <person name="Fosler C."/>
            <person name="Gabrielian A.E."/>
            <person name="Garg N.S."/>
            <person name="Gelbart W.M."/>
            <person name="Glasser K."/>
            <person name="Glodek A."/>
            <person name="Gong F."/>
            <person name="Gorrell J.H."/>
            <person name="Gu Z."/>
            <person name="Guan P."/>
            <person name="Harris M."/>
            <person name="Harris N.L."/>
            <person name="Harvey D.A."/>
            <person name="Heiman T.J."/>
            <person name="Hernandez J.R."/>
            <person name="Houck J."/>
            <person name="Hostin D."/>
            <person name="Houston K.A."/>
            <person name="Howland T.J."/>
            <person name="Wei M.-H."/>
            <person name="Ibegwam C."/>
            <person name="Jalali M."/>
            <person name="Kalush F."/>
            <person name="Karpen G.H."/>
            <person name="Ke Z."/>
            <person name="Kennison J.A."/>
            <person name="Ketchum K.A."/>
            <person name="Kimmel B.E."/>
            <person name="Kodira C.D."/>
            <person name="Kraft C.L."/>
            <person name="Kravitz S."/>
            <person name="Kulp D."/>
            <person name="Lai Z."/>
            <person name="Lasko P."/>
            <person name="Lei Y."/>
            <person name="Levitsky A.A."/>
            <person name="Li J.H."/>
            <person name="Li Z."/>
            <person name="Liang Y."/>
            <person name="Lin X."/>
            <person name="Liu X."/>
            <person name="Mattei B."/>
            <person name="McIntosh T.C."/>
            <person name="McLeod M.P."/>
            <person name="McPherson D."/>
            <person name="Merkulov G."/>
            <person name="Milshina N.V."/>
            <person name="Mobarry C."/>
            <person name="Morris J."/>
            <person name="Moshrefi A."/>
            <person name="Mount S.M."/>
            <person name="Moy M."/>
            <person name="Murphy B."/>
            <person name="Murphy L."/>
            <person name="Muzny D.M."/>
            <person name="Nelson D.L."/>
            <person name="Nelson D.R."/>
            <person name="Nelson K.A."/>
            <person name="Nixon K."/>
            <person name="Nusskern D.R."/>
            <person name="Pacleb J.M."/>
            <person name="Palazzolo M."/>
            <person name="Pittman G.S."/>
            <person name="Pan S."/>
            <person name="Pollard J."/>
            <person name="Puri V."/>
            <person name="Reese M.G."/>
            <person name="Reinert K."/>
            <person name="Remington K."/>
            <person name="Saunders R.D.C."/>
            <person name="Scheeler F."/>
            <person name="Shen H."/>
            <person name="Shue B.C."/>
            <person name="Siden-Kiamos I."/>
            <person name="Simpson M."/>
            <person name="Skupski M.P."/>
            <person name="Smith T.J."/>
            <person name="Spier E."/>
            <person name="Spradling A.C."/>
            <person name="Stapleton M."/>
            <person name="Strong R."/>
            <person name="Sun E."/>
            <person name="Svirskas R."/>
            <person name="Tector C."/>
            <person name="Turner R."/>
            <person name="Venter E."/>
            <person name="Wang A.H."/>
            <person name="Wang X."/>
            <person name="Wang Z.-Y."/>
            <person name="Wassarman D.A."/>
            <person name="Weinstock G.M."/>
            <person name="Weissenbach J."/>
            <person name="Williams S.M."/>
            <person name="Woodage T."/>
            <person name="Worley K.C."/>
            <person name="Wu D."/>
            <person name="Yang S."/>
            <person name="Yao Q.A."/>
            <person name="Ye J."/>
            <person name="Yeh R.-F."/>
            <person name="Zaveri J.S."/>
            <person name="Zhan M."/>
            <person name="Zhang G."/>
            <person name="Zhao Q."/>
            <person name="Zheng L."/>
            <person name="Zheng X.H."/>
            <person name="Zhong F.N."/>
            <person name="Zhong W."/>
            <person name="Zhou X."/>
            <person name="Zhu S.C."/>
            <person name="Zhu X."/>
            <person name="Smith H.O."/>
            <person name="Gibbs R.A."/>
            <person name="Myers E.W."/>
            <person name="Rubin G.M."/>
            <person name="Venter J.C."/>
        </authorList>
    </citation>
    <scope>NUCLEOTIDE SEQUENCE [LARGE SCALE GENOMIC DNA]</scope>
    <source>
        <strain>Berkeley</strain>
    </source>
</reference>
<reference key="4">
    <citation type="journal article" date="2002" name="Genome Biol.">
        <title>Annotation of the Drosophila melanogaster euchromatic genome: a systematic review.</title>
        <authorList>
            <person name="Misra S."/>
            <person name="Crosby M.A."/>
            <person name="Mungall C.J."/>
            <person name="Matthews B.B."/>
            <person name="Campbell K.S."/>
            <person name="Hradecky P."/>
            <person name="Huang Y."/>
            <person name="Kaminker J.S."/>
            <person name="Millburn G.H."/>
            <person name="Prochnik S.E."/>
            <person name="Smith C.D."/>
            <person name="Tupy J.L."/>
            <person name="Whitfield E.J."/>
            <person name="Bayraktaroglu L."/>
            <person name="Berman B.P."/>
            <person name="Bettencourt B.R."/>
            <person name="Celniker S.E."/>
            <person name="de Grey A.D.N.J."/>
            <person name="Drysdale R.A."/>
            <person name="Harris N.L."/>
            <person name="Richter J."/>
            <person name="Russo S."/>
            <person name="Schroeder A.J."/>
            <person name="Shu S.Q."/>
            <person name="Stapleton M."/>
            <person name="Yamada C."/>
            <person name="Ashburner M."/>
            <person name="Gelbart W.M."/>
            <person name="Rubin G.M."/>
            <person name="Lewis S.E."/>
        </authorList>
    </citation>
    <scope>GENOME REANNOTATION</scope>
    <source>
        <strain>Berkeley</strain>
    </source>
</reference>
<reference key="5">
    <citation type="journal article" date="2002" name="Genome Biol.">
        <title>A Drosophila full-length cDNA resource.</title>
        <authorList>
            <person name="Stapleton M."/>
            <person name="Carlson J.W."/>
            <person name="Brokstein P."/>
            <person name="Yu C."/>
            <person name="Champe M."/>
            <person name="George R.A."/>
            <person name="Guarin H."/>
            <person name="Kronmiller B."/>
            <person name="Pacleb J.M."/>
            <person name="Park S."/>
            <person name="Wan K.H."/>
            <person name="Rubin G.M."/>
            <person name="Celniker S.E."/>
        </authorList>
    </citation>
    <scope>NUCLEOTIDE SEQUENCE [LARGE SCALE MRNA]</scope>
    <source>
        <strain>Berkeley</strain>
        <tissue>Embryo</tissue>
    </source>
</reference>
<reference key="6">
    <citation type="submission" date="2003-02" db="EMBL/GenBank/DDBJ databases">
        <authorList>
            <person name="Stapleton M."/>
            <person name="Brokstein P."/>
            <person name="Hong L."/>
            <person name="Agbayani A."/>
            <person name="Carlson J.W."/>
            <person name="Champe M."/>
            <person name="Chavez C."/>
            <person name="Dorsett V."/>
            <person name="Dresnek D."/>
            <person name="Farfan D."/>
            <person name="Frise E."/>
            <person name="George R.A."/>
            <person name="Gonzalez M."/>
            <person name="Guarin H."/>
            <person name="Kronmiller B."/>
            <person name="Li P.W."/>
            <person name="Liao G."/>
            <person name="Miranda A."/>
            <person name="Mungall C.J."/>
            <person name="Nunoo J."/>
            <person name="Pacleb J.M."/>
            <person name="Paragas V."/>
            <person name="Park S."/>
            <person name="Patel S."/>
            <person name="Phouanenavong S."/>
            <person name="Wan K.H."/>
            <person name="Yu C."/>
            <person name="Lewis S.E."/>
            <person name="Rubin G.M."/>
            <person name="Celniker S.E."/>
        </authorList>
    </citation>
    <scope>NUCLEOTIDE SEQUENCE [LARGE SCALE MRNA]</scope>
    <source>
        <strain>Berkeley</strain>
        <tissue>Embryo</tissue>
    </source>
</reference>
<sequence length="332" mass="35350">MSKIGINGFGRIGRLVLRAAIDKGASVVAVNDPFIDVNYMVYLFKFDSTHGRFKGTVAAEGGFLVVNGQKITVFSERDPANINWASAGAEYVVESTGVFTTIDKASTHLKGGAKKVIISAPSADAPMFVCGVNLDAYSPDMKVVSNASCTTNCLAPLAKVINDNFEIVEGLMTTVHATTATQKTVDGPSGKLWRDGRGAAQNIIPAATGAAKAVGKVIPALNGKLTGMAFRVPTPNVSVVDLTVRLGKGATYDEIKAKVEEASKGPLKGILGYTDEEVVSTDFFSDTHSSVFDAKAGISLNDKFVKLISWYDNEFGYSNRVIDLIKYMQSKD</sequence>
<protein>
    <recommendedName>
        <fullName>Glyceraldehyde-3-phosphate dehydrogenase 1</fullName>
        <ecNumber>1.2.1.12</ecNumber>
    </recommendedName>
    <alternativeName>
        <fullName>Glyceraldehyde-3-phosphate dehydrogenase I</fullName>
        <shortName>GAPDH I</shortName>
    </alternativeName>
</protein>
<proteinExistence type="evidence at transcript level"/>